<evidence type="ECO:0000250" key="1"/>
<evidence type="ECO:0000255" key="2"/>
<evidence type="ECO:0000255" key="3">
    <source>
        <dbReference type="PROSITE-ProRule" id="PRU10067"/>
    </source>
</evidence>
<evidence type="ECO:0000269" key="4">
    <source>
    </source>
</evidence>
<evidence type="ECO:0000269" key="5">
    <source>
    </source>
</evidence>
<evidence type="ECO:0000269" key="6">
    <source>
    </source>
</evidence>
<evidence type="ECO:0000305" key="7"/>
<proteinExistence type="evidence at transcript level"/>
<protein>
    <recommendedName>
        <fullName>Extracellular exo-inulinase inuE</fullName>
        <ecNumber>3.2.1.80</ecNumber>
    </recommendedName>
</protein>
<organism>
    <name type="scientific">Aspergillus niger (strain ATCC MYA-4892 / CBS 513.88 / FGSC A1513)</name>
    <dbReference type="NCBI Taxonomy" id="425011"/>
    <lineage>
        <taxon>Eukaryota</taxon>
        <taxon>Fungi</taxon>
        <taxon>Dikarya</taxon>
        <taxon>Ascomycota</taxon>
        <taxon>Pezizomycotina</taxon>
        <taxon>Eurotiomycetes</taxon>
        <taxon>Eurotiomycetidae</taxon>
        <taxon>Eurotiales</taxon>
        <taxon>Aspergillaceae</taxon>
        <taxon>Aspergillus</taxon>
        <taxon>Aspergillus subgen. Circumdati</taxon>
    </lineage>
</organism>
<feature type="signal peptide" evidence="2">
    <location>
        <begin position="1"/>
        <end position="19"/>
    </location>
</feature>
<feature type="chain" id="PRO_5000713588" description="Extracellular exo-inulinase inuE">
    <location>
        <begin position="20"/>
        <end position="537"/>
    </location>
</feature>
<feature type="active site" evidence="3">
    <location>
        <position position="41"/>
    </location>
</feature>
<feature type="glycosylation site" description="N-linked (GlcNAc...) asparagine" evidence="2">
    <location>
        <position position="49"/>
    </location>
</feature>
<feature type="glycosylation site" description="N-linked (GlcNAc...) asparagine" evidence="2">
    <location>
        <position position="67"/>
    </location>
</feature>
<feature type="glycosylation site" description="N-linked (GlcNAc...) asparagine" evidence="2">
    <location>
        <position position="112"/>
    </location>
</feature>
<feature type="glycosylation site" description="N-linked (GlcNAc...) asparagine" evidence="2">
    <location>
        <position position="300"/>
    </location>
</feature>
<feature type="glycosylation site" description="N-linked (GlcNAc...) asparagine" evidence="2">
    <location>
        <position position="363"/>
    </location>
</feature>
<feature type="glycosylation site" description="N-linked (GlcNAc...) asparagine" evidence="2">
    <location>
        <position position="398"/>
    </location>
</feature>
<feature type="glycosylation site" description="N-linked (GlcNAc...) asparagine" evidence="2">
    <location>
        <position position="430"/>
    </location>
</feature>
<feature type="glycosylation site" description="N-linked (GlcNAc...) asparagine" evidence="2">
    <location>
        <position position="531"/>
    </location>
</feature>
<keyword id="KW-0119">Carbohydrate metabolism</keyword>
<keyword id="KW-0325">Glycoprotein</keyword>
<keyword id="KW-0326">Glycosidase</keyword>
<keyword id="KW-0378">Hydrolase</keyword>
<keyword id="KW-0624">Polysaccharide degradation</keyword>
<keyword id="KW-1185">Reference proteome</keyword>
<keyword id="KW-0964">Secreted</keyword>
<keyword id="KW-0732">Signal</keyword>
<accession>A2R0E0</accession>
<accession>Q0ZR33</accession>
<sequence>MARLLKAVTVCALAGIAHAFNYDQPYRGQYHFSPQKNWMNDPNGLLYHNGTYHLFFQYNPGGIEWGNISWGHATSEDLTHWEEQPVALLARGYGSDVTEMYFSGSAVADVNNTSGFGKDGKTPLVAMYTSYYPVAQTLPSGQTVQEDQQSQSIAYSLDDGLTWTTYDAANPVIPNPPQPYQAQYQNFRDPFVFWHDESQKWVVVTSIAELHKLAIYTSDNLKDWKLVSEFGPYNAQGGVWECPGLFKLPLDGGSSTKWVITSGLNPGGPPGTVGSGTQYFVGEFDGTTFTPDADTVYPGNSTANWMDWGPDFYAAAGYNGLSIKDHVHIGWMNNWQYGANIPTYPWRSAMAIPRHLALKTINNKTTLVQQPQEAWSSISSKHPLYSRTYSTFSEGSTNASTTGETFRVDLSFSATSKASTFAIALRASANFTEQTLAGYDFAKQQIFLDRTKSGDVSFDNTFASVYHGPLVPDSTSMVRLSIFVDRSSVEVFGGQGETSLTAQIFPSNDAVHARLVSTGGATEDVRVDVHNITSTWN</sequence>
<gene>
    <name type="primary">inuE</name>
    <name type="synonym">inu1</name>
    <name type="ORF">An12g08280</name>
</gene>
<name>INUE_ASPNC</name>
<dbReference type="EC" id="3.2.1.80"/>
<dbReference type="EMBL" id="DQ233222">
    <property type="protein sequence ID" value="ABB59682.1"/>
    <property type="molecule type" value="Genomic_DNA"/>
</dbReference>
<dbReference type="EMBL" id="AM270284">
    <property type="protein sequence ID" value="CAK41278.1"/>
    <property type="molecule type" value="Genomic_DNA"/>
</dbReference>
<dbReference type="RefSeq" id="XP_001395879.1">
    <property type="nucleotide sequence ID" value="XM_001395842.1"/>
</dbReference>
<dbReference type="SMR" id="A2R0E0"/>
<dbReference type="CAZy" id="GH32">
    <property type="family name" value="Glycoside Hydrolase Family 32"/>
</dbReference>
<dbReference type="GlyCosmos" id="A2R0E0">
    <property type="glycosylation" value="8 sites, No reported glycans"/>
</dbReference>
<dbReference type="EnsemblFungi" id="CAK41278">
    <property type="protein sequence ID" value="CAK41278"/>
    <property type="gene ID" value="An12g08280"/>
</dbReference>
<dbReference type="GeneID" id="4986179"/>
<dbReference type="KEGG" id="ang:An12g08280"/>
<dbReference type="VEuPathDB" id="FungiDB:An12g08280"/>
<dbReference type="HOGENOM" id="CLU_001528_3_0_1"/>
<dbReference type="Proteomes" id="UP000006706">
    <property type="component" value="Chromosome 3L"/>
</dbReference>
<dbReference type="GO" id="GO:0005737">
    <property type="term" value="C:cytoplasm"/>
    <property type="evidence" value="ECO:0007669"/>
    <property type="project" value="TreeGrafter"/>
</dbReference>
<dbReference type="GO" id="GO:0005576">
    <property type="term" value="C:extracellular region"/>
    <property type="evidence" value="ECO:0007669"/>
    <property type="project" value="UniProtKB-SubCell"/>
</dbReference>
<dbReference type="GO" id="GO:0051669">
    <property type="term" value="F:fructan beta-fructosidase activity"/>
    <property type="evidence" value="ECO:0007669"/>
    <property type="project" value="UniProtKB-EC"/>
</dbReference>
<dbReference type="GO" id="GO:0051670">
    <property type="term" value="F:inulinase activity"/>
    <property type="evidence" value="ECO:0000314"/>
    <property type="project" value="AspGD"/>
</dbReference>
<dbReference type="GO" id="GO:0004575">
    <property type="term" value="F:sucrose alpha-glucosidase activity"/>
    <property type="evidence" value="ECO:0007669"/>
    <property type="project" value="TreeGrafter"/>
</dbReference>
<dbReference type="GO" id="GO:0000272">
    <property type="term" value="P:polysaccharide catabolic process"/>
    <property type="evidence" value="ECO:0007669"/>
    <property type="project" value="UniProtKB-KW"/>
</dbReference>
<dbReference type="GO" id="GO:0005987">
    <property type="term" value="P:sucrose catabolic process"/>
    <property type="evidence" value="ECO:0007669"/>
    <property type="project" value="TreeGrafter"/>
</dbReference>
<dbReference type="CDD" id="cd18622">
    <property type="entry name" value="GH32_Inu-like"/>
    <property type="match status" value="1"/>
</dbReference>
<dbReference type="FunFam" id="2.60.120.560:FF:000003">
    <property type="entry name" value="Extracellular exo-inulinase inuE"/>
    <property type="match status" value="1"/>
</dbReference>
<dbReference type="FunFam" id="2.115.10.20:FF:000002">
    <property type="entry name" value="Invertase 2"/>
    <property type="match status" value="1"/>
</dbReference>
<dbReference type="Gene3D" id="2.60.120.560">
    <property type="entry name" value="Exo-inulinase, domain 1"/>
    <property type="match status" value="1"/>
</dbReference>
<dbReference type="Gene3D" id="2.115.10.20">
    <property type="entry name" value="Glycosyl hydrolase domain, family 43"/>
    <property type="match status" value="1"/>
</dbReference>
<dbReference type="InterPro" id="IPR013320">
    <property type="entry name" value="ConA-like_dom_sf"/>
</dbReference>
<dbReference type="InterPro" id="IPR001362">
    <property type="entry name" value="Glyco_hydro_32"/>
</dbReference>
<dbReference type="InterPro" id="IPR018053">
    <property type="entry name" value="Glyco_hydro_32_AS"/>
</dbReference>
<dbReference type="InterPro" id="IPR013189">
    <property type="entry name" value="Glyco_hydro_32_C"/>
</dbReference>
<dbReference type="InterPro" id="IPR013148">
    <property type="entry name" value="Glyco_hydro_32_N"/>
</dbReference>
<dbReference type="InterPro" id="IPR023296">
    <property type="entry name" value="Glyco_hydro_beta-prop_sf"/>
</dbReference>
<dbReference type="PANTHER" id="PTHR42800">
    <property type="entry name" value="EXOINULINASE INUD (AFU_ORTHOLOGUE AFUA_5G00480)"/>
    <property type="match status" value="1"/>
</dbReference>
<dbReference type="PANTHER" id="PTHR42800:SF1">
    <property type="entry name" value="EXOINULINASE INUD (AFU_ORTHOLOGUE AFUA_5G00480)"/>
    <property type="match status" value="1"/>
</dbReference>
<dbReference type="Pfam" id="PF08244">
    <property type="entry name" value="Glyco_hydro_32C"/>
    <property type="match status" value="1"/>
</dbReference>
<dbReference type="Pfam" id="PF00251">
    <property type="entry name" value="Glyco_hydro_32N"/>
    <property type="match status" value="1"/>
</dbReference>
<dbReference type="SMART" id="SM00640">
    <property type="entry name" value="Glyco_32"/>
    <property type="match status" value="1"/>
</dbReference>
<dbReference type="SUPFAM" id="SSF75005">
    <property type="entry name" value="Arabinanase/levansucrase/invertase"/>
    <property type="match status" value="1"/>
</dbReference>
<dbReference type="SUPFAM" id="SSF49899">
    <property type="entry name" value="Concanavalin A-like lectins/glucanases"/>
    <property type="match status" value="1"/>
</dbReference>
<dbReference type="PROSITE" id="PS00609">
    <property type="entry name" value="GLYCOSYL_HYDROL_F32"/>
    <property type="match status" value="1"/>
</dbReference>
<reference key="1">
    <citation type="journal article" date="2006" name="Microbiology">
        <title>Database mining and transcriptional analysis of genes encoding inulin-modifying enzymes of Aspergillus niger.</title>
        <authorList>
            <person name="Yuan X.L."/>
            <person name="Goosen C."/>
            <person name="Kools H."/>
            <person name="van der Maarel M.J.E.C."/>
            <person name="van den Hondel C.A.M.J.J."/>
            <person name="Dijkhuizen L."/>
            <person name="Ram A.F.J."/>
        </authorList>
    </citation>
    <scope>NUCLEOTIDE SEQUENCE [GENOMIC DNA]</scope>
    <scope>INDUCTION</scope>
    <source>
        <strain>ATCC MYA-4892 / CBS 513.88 / FGSC A1513</strain>
    </source>
</reference>
<reference key="2">
    <citation type="journal article" date="2007" name="Nat. Biotechnol.">
        <title>Genome sequencing and analysis of the versatile cell factory Aspergillus niger CBS 513.88.</title>
        <authorList>
            <person name="Pel H.J."/>
            <person name="de Winde J.H."/>
            <person name="Archer D.B."/>
            <person name="Dyer P.S."/>
            <person name="Hofmann G."/>
            <person name="Schaap P.J."/>
            <person name="Turner G."/>
            <person name="de Vries R.P."/>
            <person name="Albang R."/>
            <person name="Albermann K."/>
            <person name="Andersen M.R."/>
            <person name="Bendtsen J.D."/>
            <person name="Benen J.A.E."/>
            <person name="van den Berg M."/>
            <person name="Breestraat S."/>
            <person name="Caddick M.X."/>
            <person name="Contreras R."/>
            <person name="Cornell M."/>
            <person name="Coutinho P.M."/>
            <person name="Danchin E.G.J."/>
            <person name="Debets A.J.M."/>
            <person name="Dekker P."/>
            <person name="van Dijck P.W.M."/>
            <person name="van Dijk A."/>
            <person name="Dijkhuizen L."/>
            <person name="Driessen A.J.M."/>
            <person name="d'Enfert C."/>
            <person name="Geysens S."/>
            <person name="Goosen C."/>
            <person name="Groot G.S.P."/>
            <person name="de Groot P.W.J."/>
            <person name="Guillemette T."/>
            <person name="Henrissat B."/>
            <person name="Herweijer M."/>
            <person name="van den Hombergh J.P.T.W."/>
            <person name="van den Hondel C.A.M.J.J."/>
            <person name="van der Heijden R.T.J.M."/>
            <person name="van der Kaaij R.M."/>
            <person name="Klis F.M."/>
            <person name="Kools H.J."/>
            <person name="Kubicek C.P."/>
            <person name="van Kuyk P.A."/>
            <person name="Lauber J."/>
            <person name="Lu X."/>
            <person name="van der Maarel M.J.E.C."/>
            <person name="Meulenberg R."/>
            <person name="Menke H."/>
            <person name="Mortimer M.A."/>
            <person name="Nielsen J."/>
            <person name="Oliver S.G."/>
            <person name="Olsthoorn M."/>
            <person name="Pal K."/>
            <person name="van Peij N.N.M.E."/>
            <person name="Ram A.F.J."/>
            <person name="Rinas U."/>
            <person name="Roubos J.A."/>
            <person name="Sagt C.M.J."/>
            <person name="Schmoll M."/>
            <person name="Sun J."/>
            <person name="Ussery D."/>
            <person name="Varga J."/>
            <person name="Vervecken W."/>
            <person name="van de Vondervoort P.J.J."/>
            <person name="Wedler H."/>
            <person name="Woesten H.A.B."/>
            <person name="Zeng A.-P."/>
            <person name="van Ooyen A.J.J."/>
            <person name="Visser J."/>
            <person name="Stam H."/>
        </authorList>
    </citation>
    <scope>NUCLEOTIDE SEQUENCE [LARGE SCALE GENOMIC DNA]</scope>
    <source>
        <strain>ATCC MYA-4892 / CBS 513.88 / FGSC A1513</strain>
    </source>
</reference>
<reference key="3">
    <citation type="journal article" date="2008" name="Mol. Genet. Genomics">
        <title>Identification of InuR, a new Zn(II)2Cys6 transcriptional activator involved in the regulation of inulinolytic genes in Aspergillus niger.</title>
        <authorList>
            <person name="Yuan X.L."/>
            <person name="Roubos J.A."/>
            <person name="van den Hondel C.A."/>
            <person name="Ram A.F."/>
        </authorList>
    </citation>
    <scope>INDUCTION</scope>
</reference>
<reference key="4">
    <citation type="journal article" date="2009" name="BMC Genomics">
        <title>Transcriptomic comparison of Aspergillus niger growing on two different sugars reveals coordinated regulation of the secretory pathway.</title>
        <authorList>
            <person name="Jorgensen T.R."/>
            <person name="Goosen T."/>
            <person name="Hondel C.A."/>
            <person name="Ram A.F."/>
            <person name="Iversen J.J."/>
        </authorList>
    </citation>
    <scope>INDUCTION</scope>
</reference>
<comment type="function">
    <text evidence="1">Exo-inulinase involved in utilization of the plant storage polymer inulin, consisting of fructooligosaccharides with a degree of polymerization (DP) value from 2 to 60. Splits off terminal fructose units successively from the non-reducing end of the inulin molecule, and also hydrolyze sucrose and raffinose (By similarity).</text>
</comment>
<comment type="catalytic activity">
    <reaction>
        <text>Hydrolysis of terminal, non-reducing (2-&gt;1)- and (2-&gt;6)-linked beta-D-fructofuranose residues in fructans.</text>
        <dbReference type="EC" id="3.2.1.80"/>
    </reaction>
</comment>
<comment type="subcellular location">
    <subcellularLocation>
        <location evidence="1">Secreted</location>
    </subcellularLocation>
</comment>
<comment type="induction">
    <text evidence="4 5 6">Expression is induced in presence of maltose, sucrose or inulin and controlled by the catabolite repressor creA and by the inulinolytic genes regulator inuR.</text>
</comment>
<comment type="similarity">
    <text evidence="7">Belongs to the glycosyl hydrolase 32 family.</text>
</comment>